<accession>A6TQQ1</accession>
<feature type="chain" id="PRO_1000057362" description="Serine hydroxymethyltransferase">
    <location>
        <begin position="1"/>
        <end position="410"/>
    </location>
</feature>
<feature type="binding site" evidence="1">
    <location>
        <position position="119"/>
    </location>
    <ligand>
        <name>(6S)-5,6,7,8-tetrahydrofolate</name>
        <dbReference type="ChEBI" id="CHEBI:57453"/>
    </ligand>
</feature>
<feature type="binding site" evidence="1">
    <location>
        <begin position="123"/>
        <end position="125"/>
    </location>
    <ligand>
        <name>(6S)-5,6,7,8-tetrahydrofolate</name>
        <dbReference type="ChEBI" id="CHEBI:57453"/>
    </ligand>
</feature>
<feature type="binding site" evidence="1">
    <location>
        <begin position="351"/>
        <end position="353"/>
    </location>
    <ligand>
        <name>(6S)-5,6,7,8-tetrahydrofolate</name>
        <dbReference type="ChEBI" id="CHEBI:57453"/>
    </ligand>
</feature>
<feature type="site" description="Plays an important role in substrate specificity" evidence="1">
    <location>
        <position position="227"/>
    </location>
</feature>
<feature type="modified residue" description="N6-(pyridoxal phosphate)lysine" evidence="1">
    <location>
        <position position="228"/>
    </location>
</feature>
<evidence type="ECO:0000255" key="1">
    <source>
        <dbReference type="HAMAP-Rule" id="MF_00051"/>
    </source>
</evidence>
<proteinExistence type="inferred from homology"/>
<dbReference type="EC" id="2.1.2.1" evidence="1"/>
<dbReference type="EMBL" id="CP000724">
    <property type="protein sequence ID" value="ABR48519.1"/>
    <property type="molecule type" value="Genomic_DNA"/>
</dbReference>
<dbReference type="RefSeq" id="WP_012063494.1">
    <property type="nucleotide sequence ID" value="NC_009633.1"/>
</dbReference>
<dbReference type="SMR" id="A6TQQ1"/>
<dbReference type="STRING" id="293826.Amet_2365"/>
<dbReference type="KEGG" id="amt:Amet_2365"/>
<dbReference type="eggNOG" id="COG0112">
    <property type="taxonomic scope" value="Bacteria"/>
</dbReference>
<dbReference type="HOGENOM" id="CLU_022477_2_1_9"/>
<dbReference type="OrthoDB" id="9803846at2"/>
<dbReference type="UniPathway" id="UPA00193"/>
<dbReference type="UniPathway" id="UPA00288">
    <property type="reaction ID" value="UER01023"/>
</dbReference>
<dbReference type="Proteomes" id="UP000001572">
    <property type="component" value="Chromosome"/>
</dbReference>
<dbReference type="GO" id="GO:0005829">
    <property type="term" value="C:cytosol"/>
    <property type="evidence" value="ECO:0007669"/>
    <property type="project" value="TreeGrafter"/>
</dbReference>
<dbReference type="GO" id="GO:0004372">
    <property type="term" value="F:glycine hydroxymethyltransferase activity"/>
    <property type="evidence" value="ECO:0007669"/>
    <property type="project" value="UniProtKB-UniRule"/>
</dbReference>
<dbReference type="GO" id="GO:0030170">
    <property type="term" value="F:pyridoxal phosphate binding"/>
    <property type="evidence" value="ECO:0007669"/>
    <property type="project" value="UniProtKB-UniRule"/>
</dbReference>
<dbReference type="GO" id="GO:0019264">
    <property type="term" value="P:glycine biosynthetic process from serine"/>
    <property type="evidence" value="ECO:0007669"/>
    <property type="project" value="UniProtKB-UniRule"/>
</dbReference>
<dbReference type="GO" id="GO:0035999">
    <property type="term" value="P:tetrahydrofolate interconversion"/>
    <property type="evidence" value="ECO:0007669"/>
    <property type="project" value="UniProtKB-UniRule"/>
</dbReference>
<dbReference type="CDD" id="cd00378">
    <property type="entry name" value="SHMT"/>
    <property type="match status" value="1"/>
</dbReference>
<dbReference type="FunFam" id="3.40.640.10:FF:000001">
    <property type="entry name" value="Serine hydroxymethyltransferase"/>
    <property type="match status" value="1"/>
</dbReference>
<dbReference type="FunFam" id="3.90.1150.10:FF:000003">
    <property type="entry name" value="Serine hydroxymethyltransferase"/>
    <property type="match status" value="1"/>
</dbReference>
<dbReference type="Gene3D" id="3.90.1150.10">
    <property type="entry name" value="Aspartate Aminotransferase, domain 1"/>
    <property type="match status" value="1"/>
</dbReference>
<dbReference type="Gene3D" id="3.40.640.10">
    <property type="entry name" value="Type I PLP-dependent aspartate aminotransferase-like (Major domain)"/>
    <property type="match status" value="1"/>
</dbReference>
<dbReference type="HAMAP" id="MF_00051">
    <property type="entry name" value="SHMT"/>
    <property type="match status" value="1"/>
</dbReference>
<dbReference type="InterPro" id="IPR015424">
    <property type="entry name" value="PyrdxlP-dep_Trfase"/>
</dbReference>
<dbReference type="InterPro" id="IPR015421">
    <property type="entry name" value="PyrdxlP-dep_Trfase_major"/>
</dbReference>
<dbReference type="InterPro" id="IPR015422">
    <property type="entry name" value="PyrdxlP-dep_Trfase_small"/>
</dbReference>
<dbReference type="InterPro" id="IPR001085">
    <property type="entry name" value="Ser_HO-MeTrfase"/>
</dbReference>
<dbReference type="InterPro" id="IPR049943">
    <property type="entry name" value="Ser_HO-MeTrfase-like"/>
</dbReference>
<dbReference type="InterPro" id="IPR019798">
    <property type="entry name" value="Ser_HO-MeTrfase_PLP_BS"/>
</dbReference>
<dbReference type="InterPro" id="IPR039429">
    <property type="entry name" value="SHMT-like_dom"/>
</dbReference>
<dbReference type="NCBIfam" id="NF000586">
    <property type="entry name" value="PRK00011.1"/>
    <property type="match status" value="1"/>
</dbReference>
<dbReference type="PANTHER" id="PTHR11680">
    <property type="entry name" value="SERINE HYDROXYMETHYLTRANSFERASE"/>
    <property type="match status" value="1"/>
</dbReference>
<dbReference type="PANTHER" id="PTHR11680:SF35">
    <property type="entry name" value="SERINE HYDROXYMETHYLTRANSFERASE 1"/>
    <property type="match status" value="1"/>
</dbReference>
<dbReference type="Pfam" id="PF00464">
    <property type="entry name" value="SHMT"/>
    <property type="match status" value="1"/>
</dbReference>
<dbReference type="PIRSF" id="PIRSF000412">
    <property type="entry name" value="SHMT"/>
    <property type="match status" value="1"/>
</dbReference>
<dbReference type="SUPFAM" id="SSF53383">
    <property type="entry name" value="PLP-dependent transferases"/>
    <property type="match status" value="1"/>
</dbReference>
<dbReference type="PROSITE" id="PS00096">
    <property type="entry name" value="SHMT"/>
    <property type="match status" value="1"/>
</dbReference>
<name>GLYA_ALKMQ</name>
<organism>
    <name type="scientific">Alkaliphilus metalliredigens (strain QYMF)</name>
    <dbReference type="NCBI Taxonomy" id="293826"/>
    <lineage>
        <taxon>Bacteria</taxon>
        <taxon>Bacillati</taxon>
        <taxon>Bacillota</taxon>
        <taxon>Clostridia</taxon>
        <taxon>Peptostreptococcales</taxon>
        <taxon>Natronincolaceae</taxon>
        <taxon>Alkaliphilus</taxon>
    </lineage>
</organism>
<reference key="1">
    <citation type="journal article" date="2016" name="Genome Announc.">
        <title>Complete genome sequence of Alkaliphilus metalliredigens strain QYMF, an alkaliphilic and metal-reducing bacterium isolated from borax-contaminated leachate ponds.</title>
        <authorList>
            <person name="Hwang C."/>
            <person name="Copeland A."/>
            <person name="Lucas S."/>
            <person name="Lapidus A."/>
            <person name="Barry K."/>
            <person name="Detter J.C."/>
            <person name="Glavina Del Rio T."/>
            <person name="Hammon N."/>
            <person name="Israni S."/>
            <person name="Dalin E."/>
            <person name="Tice H."/>
            <person name="Pitluck S."/>
            <person name="Chertkov O."/>
            <person name="Brettin T."/>
            <person name="Bruce D."/>
            <person name="Han C."/>
            <person name="Schmutz J."/>
            <person name="Larimer F."/>
            <person name="Land M.L."/>
            <person name="Hauser L."/>
            <person name="Kyrpides N."/>
            <person name="Mikhailova N."/>
            <person name="Ye Q."/>
            <person name="Zhou J."/>
            <person name="Richardson P."/>
            <person name="Fields M.W."/>
        </authorList>
    </citation>
    <scope>NUCLEOTIDE SEQUENCE [LARGE SCALE GENOMIC DNA]</scope>
    <source>
        <strain>QYMF</strain>
    </source>
</reference>
<gene>
    <name evidence="1" type="primary">glyA</name>
    <name type="ordered locus">Amet_2365</name>
</gene>
<sequence length="410" mass="45223">MNFDTLKKFDEEIYEVIQKETKRQRGSIELIASENFVTTAVMEAMGSQLTNKYAEGYPDKRYYGGCEEVDVAENLARNRLKKLFNAEHANVQPHSGANANIGVYFATLEPGDTVLGMNLSHGGHLTHGSPVNISGAYYNFVAYGVDSVTHRIDYEEVMRVAQEAKPKMIVAGASAYPRAIDFKKFREIADAVGAYLMVDMAHIAGLVAVGLHQNPCEYADFVTTTTHKTLRGPRGGAILCKEKYAKIIDKAIFPGLQGGPLMHVIAAKAVAFKEALEPGFKAYQEQVIKNAKALGEELKKQGFDLVSDGTDTHLLLIDLRNKNITGKDAERLFDEVGITVNKNTIPFDPQSPFVTSGIRIGTPAVTTRGMKEEEMKKIAGVMNIIIDHPEKVSEAQKVVDELCNQFKLYE</sequence>
<keyword id="KW-0028">Amino-acid biosynthesis</keyword>
<keyword id="KW-0963">Cytoplasm</keyword>
<keyword id="KW-0554">One-carbon metabolism</keyword>
<keyword id="KW-0663">Pyridoxal phosphate</keyword>
<keyword id="KW-1185">Reference proteome</keyword>
<keyword id="KW-0808">Transferase</keyword>
<comment type="function">
    <text evidence="1">Catalyzes the reversible interconversion of serine and glycine with tetrahydrofolate (THF) serving as the one-carbon carrier. This reaction serves as the major source of one-carbon groups required for the biosynthesis of purines, thymidylate, methionine, and other important biomolecules. Also exhibits THF-independent aldolase activity toward beta-hydroxyamino acids, producing glycine and aldehydes, via a retro-aldol mechanism.</text>
</comment>
<comment type="catalytic activity">
    <reaction evidence="1">
        <text>(6R)-5,10-methylene-5,6,7,8-tetrahydrofolate + glycine + H2O = (6S)-5,6,7,8-tetrahydrofolate + L-serine</text>
        <dbReference type="Rhea" id="RHEA:15481"/>
        <dbReference type="ChEBI" id="CHEBI:15377"/>
        <dbReference type="ChEBI" id="CHEBI:15636"/>
        <dbReference type="ChEBI" id="CHEBI:33384"/>
        <dbReference type="ChEBI" id="CHEBI:57305"/>
        <dbReference type="ChEBI" id="CHEBI:57453"/>
        <dbReference type="EC" id="2.1.2.1"/>
    </reaction>
</comment>
<comment type="cofactor">
    <cofactor evidence="1">
        <name>pyridoxal 5'-phosphate</name>
        <dbReference type="ChEBI" id="CHEBI:597326"/>
    </cofactor>
</comment>
<comment type="pathway">
    <text evidence="1">One-carbon metabolism; tetrahydrofolate interconversion.</text>
</comment>
<comment type="pathway">
    <text evidence="1">Amino-acid biosynthesis; glycine biosynthesis; glycine from L-serine: step 1/1.</text>
</comment>
<comment type="subunit">
    <text evidence="1">Homodimer.</text>
</comment>
<comment type="subcellular location">
    <subcellularLocation>
        <location evidence="1">Cytoplasm</location>
    </subcellularLocation>
</comment>
<comment type="similarity">
    <text evidence="1">Belongs to the SHMT family.</text>
</comment>
<protein>
    <recommendedName>
        <fullName evidence="1">Serine hydroxymethyltransferase</fullName>
        <shortName evidence="1">SHMT</shortName>
        <shortName evidence="1">Serine methylase</shortName>
        <ecNumber evidence="1">2.1.2.1</ecNumber>
    </recommendedName>
</protein>